<organism>
    <name type="scientific">Candida albicans (strain SC5314 / ATCC MYA-2876)</name>
    <name type="common">Yeast</name>
    <dbReference type="NCBI Taxonomy" id="237561"/>
    <lineage>
        <taxon>Eukaryota</taxon>
        <taxon>Fungi</taxon>
        <taxon>Dikarya</taxon>
        <taxon>Ascomycota</taxon>
        <taxon>Saccharomycotina</taxon>
        <taxon>Pichiomycetes</taxon>
        <taxon>Debaryomycetaceae</taxon>
        <taxon>Candida/Lodderomyces clade</taxon>
        <taxon>Candida</taxon>
    </lineage>
</organism>
<comment type="function">
    <text evidence="3 4 6 7 9 10 11">Component of the N-acetylglucosamine catabolic cascade that phosphorylates N-acetylglucosamine (GlcNAc), and allows the unique ability to utilise GlcNAc as carbon source. Converts GlcNAc to GlcNAc-6-P. Also able to phosphorylate glucose, glucosamine (GlcN), and mannose. Galactose, fructose, N-acetylmannosamine (ManNAc), mannosamine (ManN), galactosamine (GalN), and N-acetylgalactosamine (GalNAc) are not phosphorylated by HXK1. GlcNAc metabolism is closely associated with virulence and morphogenesis, and is involved in the cell wall synthesis. Acts both as a repressor and an activator of genes involved in maintaining cellular homeostasis. Contributes to white-opaque morphological transition and plays a role as a filamentation repressor.</text>
</comment>
<comment type="catalytic activity">
    <reaction evidence="3">
        <text>N-acetyl-D-glucosamine + ATP = N-acetyl-D-glucosamine 6-phosphate + ADP + H(+)</text>
        <dbReference type="Rhea" id="RHEA:17417"/>
        <dbReference type="ChEBI" id="CHEBI:15378"/>
        <dbReference type="ChEBI" id="CHEBI:30616"/>
        <dbReference type="ChEBI" id="CHEBI:57513"/>
        <dbReference type="ChEBI" id="CHEBI:456216"/>
        <dbReference type="ChEBI" id="CHEBI:506227"/>
        <dbReference type="EC" id="2.7.1.59"/>
    </reaction>
    <physiologicalReaction direction="left-to-right" evidence="3">
        <dbReference type="Rhea" id="RHEA:17418"/>
    </physiologicalReaction>
</comment>
<comment type="catalytic activity">
    <reaction evidence="3">
        <text>D-mannose + ATP = D-mannose 6-phosphate + ADP + H(+)</text>
        <dbReference type="Rhea" id="RHEA:11028"/>
        <dbReference type="ChEBI" id="CHEBI:4208"/>
        <dbReference type="ChEBI" id="CHEBI:15378"/>
        <dbReference type="ChEBI" id="CHEBI:30616"/>
        <dbReference type="ChEBI" id="CHEBI:58735"/>
        <dbReference type="ChEBI" id="CHEBI:456216"/>
        <dbReference type="EC" id="2.7.1.1"/>
    </reaction>
    <physiologicalReaction direction="left-to-right" evidence="3">
        <dbReference type="Rhea" id="RHEA:11029"/>
    </physiologicalReaction>
</comment>
<comment type="catalytic activity">
    <reaction evidence="3">
        <text>D-glucose + ATP = D-glucose 6-phosphate + ADP + H(+)</text>
        <dbReference type="Rhea" id="RHEA:17825"/>
        <dbReference type="ChEBI" id="CHEBI:4167"/>
        <dbReference type="ChEBI" id="CHEBI:15378"/>
        <dbReference type="ChEBI" id="CHEBI:30616"/>
        <dbReference type="ChEBI" id="CHEBI:61548"/>
        <dbReference type="ChEBI" id="CHEBI:456216"/>
        <dbReference type="EC" id="2.7.1.1"/>
    </reaction>
    <physiologicalReaction direction="left-to-right" evidence="3">
        <dbReference type="Rhea" id="RHEA:17826"/>
    </physiologicalReaction>
</comment>
<comment type="catalytic activity">
    <reaction evidence="3">
        <text>D-glucosamine + ATP = D-glucosamine 6-phosphate + ADP + H(+)</text>
        <dbReference type="Rhea" id="RHEA:10948"/>
        <dbReference type="ChEBI" id="CHEBI:15378"/>
        <dbReference type="ChEBI" id="CHEBI:30616"/>
        <dbReference type="ChEBI" id="CHEBI:58723"/>
        <dbReference type="ChEBI" id="CHEBI:58725"/>
        <dbReference type="ChEBI" id="CHEBI:456216"/>
        <dbReference type="EC" id="2.7.1.1"/>
    </reaction>
    <physiologicalReaction direction="left-to-right" evidence="3">
        <dbReference type="Rhea" id="RHEA:10949"/>
    </physiologicalReaction>
</comment>
<comment type="biophysicochemical properties">
    <kinetics>
        <KM evidence="3">375.5 uM for N-acetylglucosamine (GlcNAc)</KM>
        <KM evidence="3">482.5 uM for glucose</KM>
        <KM evidence="3">426 uM for mannose</KM>
    </kinetics>
</comment>
<comment type="pathway">
    <text evidence="15">Carbohydrate metabolism; hexose metabolism.</text>
</comment>
<comment type="pathway">
    <text evidence="15">Carbohydrate degradation; glycolysis; D-glyceraldehyde 3-phosphate and glycerone phosphate from D-glucose: step 1/4.</text>
</comment>
<comment type="subunit">
    <text evidence="10">Interacts with histone deacetylase SIR2 under filamentation-inducing conditions.</text>
</comment>
<comment type="subcellular location">
    <subcellularLocation>
        <location evidence="10">Cytoplasm</location>
    </subcellularLocation>
    <subcellularLocation>
        <location evidence="10">Nucleus</location>
    </subcellularLocation>
    <subcellularLocation>
        <location evidence="10">Mitochondrion</location>
    </subcellularLocation>
    <text evidence="10">Localized in cytoplasm and nucleus in a filamentation-inducing medium whereas in 2% GlcNAc, where catabolism is more prominent, a major fraction is seen to be present in cytoplasm. Localizes to mitochondria in non-fermentative carbon sources like ethanol.</text>
</comment>
<comment type="induction">
    <text evidence="2 5 8 10">Expression is induced by N-acetylglucosamine (GlcNAc), by the alpha pheromone, and in filamentation-inducing media.</text>
</comment>
<comment type="disruption phenotype">
    <text evidence="3 4 6 9 10 11">Greatly retards the growth of cells using GlcNAc as the sole carbon source, increases resistance against farnesol, and attenuates the virulence in a mouse systemic infection model. Leads to derepression of opaque specific gene expression, as well as to constitutive filamentous growth and hyperfilamentation in filamentation-inducing conditions.</text>
</comment>
<comment type="similarity">
    <text evidence="1 14">Belongs to the hexokinase family.</text>
</comment>
<protein>
    <recommendedName>
        <fullName evidence="12">N-acetylglucosamine kinase 1</fullName>
        <shortName evidence="14">GlcNAc kinase 1</shortName>
        <ecNumber evidence="3">2.7.1.59</ecNumber>
    </recommendedName>
    <alternativeName>
        <fullName evidence="14">Hexokinase 1</fullName>
        <ecNumber evidence="3">2.7.1.1</ecNumber>
    </alternativeName>
</protein>
<proteinExistence type="evidence at protein level"/>
<keyword id="KW-0067">ATP-binding</keyword>
<keyword id="KW-0961">Cell wall biogenesis/degradation</keyword>
<keyword id="KW-0963">Cytoplasm</keyword>
<keyword id="KW-0324">Glycolysis</keyword>
<keyword id="KW-0418">Kinase</keyword>
<keyword id="KW-0496">Mitochondrion</keyword>
<keyword id="KW-0547">Nucleotide-binding</keyword>
<keyword id="KW-0539">Nucleus</keyword>
<keyword id="KW-1185">Reference proteome</keyword>
<keyword id="KW-0808">Transferase</keyword>
<keyword id="KW-0843">Virulence</keyword>
<feature type="chain" id="PRO_0000431722" description="N-acetylglucosamine kinase 1">
    <location>
        <begin position="1"/>
        <end position="493"/>
    </location>
</feature>
<feature type="domain" description="Hexokinase" evidence="1">
    <location>
        <begin position="27"/>
        <end position="490"/>
    </location>
</feature>
<feature type="region of interest" description="Hexokinase small subdomain" evidence="1">
    <location>
        <begin position="79"/>
        <end position="221"/>
    </location>
</feature>
<feature type="region of interest" description="Hexokinase large subdomain" evidence="1">
    <location>
        <begin position="222"/>
        <end position="479"/>
    </location>
</feature>
<gene>
    <name evidence="12" type="primary">HXK1</name>
    <name evidence="13" type="synonym">NAG5</name>
    <name type="ordered locus">CAALFM_C604580WA</name>
    <name type="ORF">CaO19.2154</name>
    <name type="ORF">CaO19.9701</name>
</gene>
<dbReference type="EC" id="2.7.1.59" evidence="3"/>
<dbReference type="EC" id="2.7.1.1" evidence="3"/>
<dbReference type="EMBL" id="CP017628">
    <property type="protein sequence ID" value="AOW30374.1"/>
    <property type="molecule type" value="Genomic_DNA"/>
</dbReference>
<dbReference type="RefSeq" id="XP_712429.2">
    <property type="nucleotide sequence ID" value="XM_707336.2"/>
</dbReference>
<dbReference type="SASBDB" id="Q59RW5"/>
<dbReference type="SMR" id="Q59RW5"/>
<dbReference type="STRING" id="237561.Q59RW5"/>
<dbReference type="EnsemblFungi" id="C6_04580W_A-T">
    <property type="protein sequence ID" value="C6_04580W_A-T-p1"/>
    <property type="gene ID" value="C6_04580W_A"/>
</dbReference>
<dbReference type="GeneID" id="3645964"/>
<dbReference type="KEGG" id="cal:CAALFM_C604580WA"/>
<dbReference type="CGD" id="CAL0000186127">
    <property type="gene designation" value="HXK1"/>
</dbReference>
<dbReference type="VEuPathDB" id="FungiDB:C6_04580W_A"/>
<dbReference type="eggNOG" id="KOG1369">
    <property type="taxonomic scope" value="Eukaryota"/>
</dbReference>
<dbReference type="HOGENOM" id="CLU_014393_4_1_1"/>
<dbReference type="InParanoid" id="Q59RW5"/>
<dbReference type="OrthoDB" id="419537at2759"/>
<dbReference type="BRENDA" id="2.7.1.59">
    <property type="organism ID" value="1096"/>
</dbReference>
<dbReference type="SABIO-RK" id="Q59RW5"/>
<dbReference type="UniPathway" id="UPA00109">
    <property type="reaction ID" value="UER00180"/>
</dbReference>
<dbReference type="UniPathway" id="UPA00242"/>
<dbReference type="PHI-base" id="PHI:10642"/>
<dbReference type="PHI-base" id="PHI:217"/>
<dbReference type="PRO" id="PR:Q59RW5"/>
<dbReference type="Proteomes" id="UP000000559">
    <property type="component" value="Chromosome 6"/>
</dbReference>
<dbReference type="GO" id="GO:0005829">
    <property type="term" value="C:cytosol"/>
    <property type="evidence" value="ECO:0000314"/>
    <property type="project" value="CGD"/>
</dbReference>
<dbReference type="GO" id="GO:0005739">
    <property type="term" value="C:mitochondrion"/>
    <property type="evidence" value="ECO:0000314"/>
    <property type="project" value="CGD"/>
</dbReference>
<dbReference type="GO" id="GO:0005634">
    <property type="term" value="C:nucleus"/>
    <property type="evidence" value="ECO:0000314"/>
    <property type="project" value="CGD"/>
</dbReference>
<dbReference type="GO" id="GO:0005524">
    <property type="term" value="F:ATP binding"/>
    <property type="evidence" value="ECO:0007669"/>
    <property type="project" value="UniProtKB-KW"/>
</dbReference>
<dbReference type="GO" id="GO:0005536">
    <property type="term" value="F:D-glucose binding"/>
    <property type="evidence" value="ECO:0007669"/>
    <property type="project" value="InterPro"/>
</dbReference>
<dbReference type="GO" id="GO:0008865">
    <property type="term" value="F:fructokinase activity"/>
    <property type="evidence" value="ECO:0000318"/>
    <property type="project" value="GO_Central"/>
</dbReference>
<dbReference type="GO" id="GO:0004340">
    <property type="term" value="F:glucokinase activity"/>
    <property type="evidence" value="ECO:0000318"/>
    <property type="project" value="GO_Central"/>
</dbReference>
<dbReference type="GO" id="GO:0047931">
    <property type="term" value="F:glucosamine kinase activity"/>
    <property type="evidence" value="ECO:0007669"/>
    <property type="project" value="RHEA"/>
</dbReference>
<dbReference type="GO" id="GO:0019158">
    <property type="term" value="F:mannokinase activity"/>
    <property type="evidence" value="ECO:0000318"/>
    <property type="project" value="GO_Central"/>
</dbReference>
<dbReference type="GO" id="GO:0045127">
    <property type="term" value="F:N-acetylglucosamine kinase activity"/>
    <property type="evidence" value="ECO:0000314"/>
    <property type="project" value="CGD"/>
</dbReference>
<dbReference type="GO" id="GO:0044406">
    <property type="term" value="P:adhesion of symbiont to host"/>
    <property type="evidence" value="ECO:0000314"/>
    <property type="project" value="CGD"/>
</dbReference>
<dbReference type="GO" id="GO:0051701">
    <property type="term" value="P:biological process involved in interaction with host"/>
    <property type="evidence" value="ECO:0000315"/>
    <property type="project" value="CGD"/>
</dbReference>
<dbReference type="GO" id="GO:0071555">
    <property type="term" value="P:cell wall organization"/>
    <property type="evidence" value="ECO:0007669"/>
    <property type="project" value="UniProtKB-KW"/>
</dbReference>
<dbReference type="GO" id="GO:0044114">
    <property type="term" value="P:development of symbiont in host"/>
    <property type="evidence" value="ECO:0000315"/>
    <property type="project" value="CGD"/>
</dbReference>
<dbReference type="GO" id="GO:0030447">
    <property type="term" value="P:filamentous growth"/>
    <property type="evidence" value="ECO:0000315"/>
    <property type="project" value="CGD"/>
</dbReference>
<dbReference type="GO" id="GO:0044182">
    <property type="term" value="P:filamentous growth of a population of unicellular organisms"/>
    <property type="evidence" value="ECO:0000315"/>
    <property type="project" value="CGD"/>
</dbReference>
<dbReference type="GO" id="GO:0006043">
    <property type="term" value="P:glucosamine catabolic process"/>
    <property type="evidence" value="ECO:0000315"/>
    <property type="project" value="CGD"/>
</dbReference>
<dbReference type="GO" id="GO:0051156">
    <property type="term" value="P:glucose 6-phosphate metabolic process"/>
    <property type="evidence" value="ECO:0000318"/>
    <property type="project" value="GO_Central"/>
</dbReference>
<dbReference type="GO" id="GO:0006006">
    <property type="term" value="P:glucose metabolic process"/>
    <property type="evidence" value="ECO:0000318"/>
    <property type="project" value="GO_Central"/>
</dbReference>
<dbReference type="GO" id="GO:0006096">
    <property type="term" value="P:glycolytic process"/>
    <property type="evidence" value="ECO:0000318"/>
    <property type="project" value="GO_Central"/>
</dbReference>
<dbReference type="GO" id="GO:0001678">
    <property type="term" value="P:intracellular glucose homeostasis"/>
    <property type="evidence" value="ECO:0000318"/>
    <property type="project" value="GO_Central"/>
</dbReference>
<dbReference type="GO" id="GO:0006013">
    <property type="term" value="P:mannose metabolic process"/>
    <property type="evidence" value="ECO:0000318"/>
    <property type="project" value="GO_Central"/>
</dbReference>
<dbReference type="GO" id="GO:0006046">
    <property type="term" value="P:N-acetylglucosamine catabolic process"/>
    <property type="evidence" value="ECO:0000314"/>
    <property type="project" value="CGD"/>
</dbReference>
<dbReference type="GO" id="GO:1900239">
    <property type="term" value="P:regulation of phenotypic switching"/>
    <property type="evidence" value="ECO:0000315"/>
    <property type="project" value="CGD"/>
</dbReference>
<dbReference type="CDD" id="cd24000">
    <property type="entry name" value="ASKHA_NBD_HK"/>
    <property type="match status" value="1"/>
</dbReference>
<dbReference type="Gene3D" id="3.30.420.40">
    <property type="match status" value="1"/>
</dbReference>
<dbReference type="Gene3D" id="3.40.367.20">
    <property type="match status" value="1"/>
</dbReference>
<dbReference type="InterPro" id="IPR043129">
    <property type="entry name" value="ATPase_NBD"/>
</dbReference>
<dbReference type="InterPro" id="IPR001312">
    <property type="entry name" value="Hexokinase"/>
</dbReference>
<dbReference type="InterPro" id="IPR022673">
    <property type="entry name" value="Hexokinase_C"/>
</dbReference>
<dbReference type="InterPro" id="IPR022672">
    <property type="entry name" value="Hexokinase_N"/>
</dbReference>
<dbReference type="PANTHER" id="PTHR19443">
    <property type="entry name" value="HEXOKINASE"/>
    <property type="match status" value="1"/>
</dbReference>
<dbReference type="PANTHER" id="PTHR19443:SF24">
    <property type="entry name" value="PHOSPHOTRANSFERASE"/>
    <property type="match status" value="1"/>
</dbReference>
<dbReference type="Pfam" id="PF00349">
    <property type="entry name" value="Hexokinase_1"/>
    <property type="match status" value="1"/>
</dbReference>
<dbReference type="Pfam" id="PF03727">
    <property type="entry name" value="Hexokinase_2"/>
    <property type="match status" value="1"/>
</dbReference>
<dbReference type="PRINTS" id="PR00475">
    <property type="entry name" value="HEXOKINASE"/>
</dbReference>
<dbReference type="SUPFAM" id="SSF53067">
    <property type="entry name" value="Actin-like ATPase domain"/>
    <property type="match status" value="2"/>
</dbReference>
<dbReference type="PROSITE" id="PS51748">
    <property type="entry name" value="HEXOKINASE_2"/>
    <property type="match status" value="1"/>
</dbReference>
<reference key="1">
    <citation type="journal article" date="2004" name="Proc. Natl. Acad. Sci. U.S.A.">
        <title>The diploid genome sequence of Candida albicans.</title>
        <authorList>
            <person name="Jones T."/>
            <person name="Federspiel N.A."/>
            <person name="Chibana H."/>
            <person name="Dungan J."/>
            <person name="Kalman S."/>
            <person name="Magee B.B."/>
            <person name="Newport G."/>
            <person name="Thorstenson Y.R."/>
            <person name="Agabian N."/>
            <person name="Magee P.T."/>
            <person name="Davis R.W."/>
            <person name="Scherer S."/>
        </authorList>
    </citation>
    <scope>NUCLEOTIDE SEQUENCE [LARGE SCALE GENOMIC DNA]</scope>
    <source>
        <strain>SC5314 / ATCC MYA-2876</strain>
    </source>
</reference>
<reference key="2">
    <citation type="journal article" date="2007" name="Genome Biol.">
        <title>Assembly of the Candida albicans genome into sixteen supercontigs aligned on the eight chromosomes.</title>
        <authorList>
            <person name="van het Hoog M."/>
            <person name="Rast T.J."/>
            <person name="Martchenko M."/>
            <person name="Grindle S."/>
            <person name="Dignard D."/>
            <person name="Hogues H."/>
            <person name="Cuomo C."/>
            <person name="Berriman M."/>
            <person name="Scherer S."/>
            <person name="Magee B.B."/>
            <person name="Whiteway M."/>
            <person name="Chibana H."/>
            <person name="Nantel A."/>
            <person name="Magee P.T."/>
        </authorList>
    </citation>
    <scope>GENOME REANNOTATION</scope>
    <source>
        <strain>SC5314 / ATCC MYA-2876</strain>
    </source>
</reference>
<reference key="3">
    <citation type="journal article" date="2013" name="Genome Biol.">
        <title>Assembly of a phased diploid Candida albicans genome facilitates allele-specific measurements and provides a simple model for repeat and indel structure.</title>
        <authorList>
            <person name="Muzzey D."/>
            <person name="Schwartz K."/>
            <person name="Weissman J.S."/>
            <person name="Sherlock G."/>
        </authorList>
    </citation>
    <scope>NUCLEOTIDE SEQUENCE [LARGE SCALE GENOMIC DNA]</scope>
    <scope>GENOME REANNOTATION</scope>
    <source>
        <strain>SC5314 / ATCC MYA-2876</strain>
    </source>
</reference>
<reference key="4">
    <citation type="journal article" date="2000" name="Proc. Natl. Acad. Sci. U.S.A.">
        <title>The inducible N-acetylglucosamine catabolic pathway gene cluster in Candida albicans: discrete N-acetylglucosamine-inducible factors interact at the promoter of NAG1.</title>
        <authorList>
            <person name="Kumar M.J."/>
            <person name="Jamaluddin M.S."/>
            <person name="Natarajan K."/>
            <person name="Kaur D."/>
            <person name="Datta A."/>
        </authorList>
    </citation>
    <scope>IDENTIFICATION</scope>
    <scope>INDUCTION</scope>
</reference>
<reference key="5">
    <citation type="journal article" date="2001" name="Eur. J. Biochem.">
        <title>Identification and characterization of the genes for N-acetylglucosamine kinase and N-acetylglucosamine-phosphate deacetylase in the pathogenic fungus Candida albicans.</title>
        <authorList>
            <person name="Yamada-Okabe T."/>
            <person name="Sakamori Y."/>
            <person name="Mio T."/>
            <person name="Yamada-Okabe H."/>
        </authorList>
    </citation>
    <scope>IDENTIFICATION</scope>
    <scope>DISRUPTION PHENOTYPE</scope>
    <scope>FUNCTION</scope>
    <scope>CATALYTIC ACTIVITY</scope>
    <scope>BIOPHYSICOCHEMICAL PROPERTIES</scope>
</reference>
<reference key="6">
    <citation type="journal article" date="2001" name="Infect. Immun.">
        <title>Attenuation of virulence and changes in morphology in Candida albicans by disruption of the N-acetylglucosamine catabolic pathway.</title>
        <authorList>
            <person name="Singh P."/>
            <person name="Ghosh S."/>
            <person name="Datta A."/>
        </authorList>
    </citation>
    <scope>DISRUPTION PHENOTYPE</scope>
    <scope>FUNCTION</scope>
</reference>
<reference key="7">
    <citation type="journal article" date="2006" name="J. Basic Microbiol.">
        <title>Use of the porcine intestinal epithelium (PIE)-assay to analyze early stages of colonization by the human fungal pathogen Candida albicans.</title>
        <authorList>
            <person name="Wendland J."/>
            <person name="Hellwig D."/>
            <person name="Walther A."/>
            <person name="Sickinger S."/>
            <person name="Shadkchan Y."/>
            <person name="Martin R."/>
            <person name="Bauer J."/>
            <person name="Osherov N."/>
            <person name="Tretiakov A."/>
            <person name="Saluz H.P."/>
        </authorList>
    </citation>
    <scope>DISRUPTION PHENOTYPE</scope>
    <scope>FUNCTION</scope>
</reference>
<reference key="8">
    <citation type="journal article" date="2006" name="Mol. Microbiol.">
        <title>The role of nutrient regulation and the Gpa2 protein in the mating pheromone response of C. albicans.</title>
        <authorList>
            <person name="Bennett R.J."/>
            <person name="Johnson A.D."/>
        </authorList>
    </citation>
    <scope>INDUCTION</scope>
</reference>
<reference key="9">
    <citation type="journal article" date="2009" name="Appl. Environ. Microbiol.">
        <title>N-acetylglucosamine utilization by Saccharomyces cerevisiae based on expression of Candida albicans NAG genes.</title>
        <authorList>
            <person name="Wendland J."/>
            <person name="Schaub Y."/>
            <person name="Walther A."/>
        </authorList>
    </citation>
    <scope>FUNCTION</scope>
</reference>
<reference key="10">
    <citation type="journal article" date="2010" name="Eukaryot. Cell">
        <title>Identification of GIG1, a GlcNAc-induced gene in Candida albicans needed for normal sensitivity to the chitin synthase inhibitor nikkomycin Z.</title>
        <authorList>
            <person name="Gunasekera A."/>
            <person name="Alvarez F.J."/>
            <person name="Douglas L.M."/>
            <person name="Wang H.X."/>
            <person name="Rosebrock A.P."/>
            <person name="Konopka J.B."/>
        </authorList>
    </citation>
    <scope>INDUCTION</scope>
</reference>
<reference key="11">
    <citation type="journal article" date="2011" name="J. Biol. Chem.">
        <title>N-acetylglucosamine (GlcNAc) induction of hyphal morphogenesis and transcriptional responses in Candida albicans are not dependent on its metabolism.</title>
        <authorList>
            <person name="Naseem S."/>
            <person name="Gunasekera A."/>
            <person name="Araya E."/>
            <person name="Konopka J.B."/>
        </authorList>
    </citation>
    <scope>DISRUPTION PHENOTYPE</scope>
    <scope>FUNCTION</scope>
</reference>
<reference key="12">
    <citation type="journal article" date="2013" name="PLoS ONE">
        <title>N-acetylglucosamine kinase, HXK1 is involved in morphogenetic transition and metabolic gene expression in Candida albicans.</title>
        <authorList>
            <person name="Rao K.H."/>
            <person name="Ghosh S."/>
            <person name="Natarajan K."/>
            <person name="Datta A."/>
        </authorList>
    </citation>
    <scope>DISRUPTION PHENOTYPE</scope>
    <scope>INDUCTION</scope>
    <scope>INTERACTION WITH SIR2</scope>
    <scope>FUNCTION</scope>
    <scope>SUBCELLULAR LOCATION</scope>
</reference>
<reference key="13">
    <citation type="journal article" date="2014" name="Biochem. Biophys. Res. Commun.">
        <title>N-acetylglucosamine kinase, HXK1 contributes to white-opaque morphological transition in Candida albicans.</title>
        <authorList>
            <person name="Rao K.H."/>
            <person name="Ruhela D."/>
            <person name="Ghosh S."/>
            <person name="Abdin M.Z."/>
            <person name="Datta A."/>
        </authorList>
    </citation>
    <scope>FUNCTION</scope>
    <scope>DISRUPTION PHENOTYPE</scope>
</reference>
<sequence>MTETSISGLRGPKSMYFMEIVDVSSQESSVLSSIVESFTSAVSASNLGVYSDEVLCDIKSSLKENSPITMLPNYNVSPTGDEHGQYLVIDLGGSTLRIAVVDISKPHPNLSRSERITIVVEKSWIIGNDFKRIDGEFFKYIGSKINEILMGQNVIDVKSVINTGITWSFPLETTDYNRGKIKHVSKGYTVGEDIYDKDLKMVLEDTLRQEYGLTLDVQSILNDSLAVYSAGCFIDSKMKLAMVLGTGINMCCSLKRSSDIHPSKMLADATLFNCELSLFGQNLCKDFATKYDIIIDKRFAGLSHHFKTFMEPDPITKTLFQPHELMTSGRYLPELTRLVVVDLIEAGEIFQNVDHQQMYQEYGGFSGELICFVHENDDYDDIHDKLCKAYGWTTVGLSDIVCLKEVVSCIIKRAAFIVANAIIAFFKLLGSDELGGDVTIGYVGSVLNYFHKYRRLIVEYVNSAEEAKGIKVDLKLIENSSIIGAAIGAAYHK</sequence>
<accession>Q59RW5</accession>
<accession>A0A1D8PQG2</accession>
<accession>Q59RG5</accession>
<evidence type="ECO:0000255" key="1">
    <source>
        <dbReference type="PROSITE-ProRule" id="PRU01084"/>
    </source>
</evidence>
<evidence type="ECO:0000269" key="2">
    <source>
    </source>
</evidence>
<evidence type="ECO:0000269" key="3">
    <source>
    </source>
</evidence>
<evidence type="ECO:0000269" key="4">
    <source>
    </source>
</evidence>
<evidence type="ECO:0000269" key="5">
    <source>
    </source>
</evidence>
<evidence type="ECO:0000269" key="6">
    <source>
    </source>
</evidence>
<evidence type="ECO:0000269" key="7">
    <source>
    </source>
</evidence>
<evidence type="ECO:0000269" key="8">
    <source>
    </source>
</evidence>
<evidence type="ECO:0000269" key="9">
    <source>
    </source>
</evidence>
<evidence type="ECO:0000269" key="10">
    <source>
    </source>
</evidence>
<evidence type="ECO:0000269" key="11">
    <source>
    </source>
</evidence>
<evidence type="ECO:0000303" key="12">
    <source>
    </source>
</evidence>
<evidence type="ECO:0000303" key="13">
    <source>
    </source>
</evidence>
<evidence type="ECO:0000305" key="14"/>
<evidence type="ECO:0000305" key="15">
    <source>
    </source>
</evidence>
<name>HXK1_CANAL</name>